<proteinExistence type="inferred from homology"/>
<dbReference type="EMBL" id="M38183">
    <property type="protein sequence ID" value="AAC32412.1"/>
    <property type="status" value="ALT_INIT"/>
    <property type="molecule type" value="Genomic_DNA"/>
</dbReference>
<dbReference type="PIR" id="E36785">
    <property type="entry name" value="QQCVS3"/>
</dbReference>
<dbReference type="RefSeq" id="NP_047245.1">
    <property type="nucleotide sequence ID" value="NC_001936.1"/>
</dbReference>
<dbReference type="KEGG" id="vg:956396"/>
<dbReference type="OrthoDB" id="13855at10239"/>
<dbReference type="Proteomes" id="UP000009151">
    <property type="component" value="Genome"/>
</dbReference>
<dbReference type="GO" id="GO:0016032">
    <property type="term" value="P:viral process"/>
    <property type="evidence" value="ECO:0007669"/>
    <property type="project" value="InterPro"/>
</dbReference>
<dbReference type="InterPro" id="IPR000657">
    <property type="entry name" value="Gemini_AL3"/>
</dbReference>
<dbReference type="Pfam" id="PF01407">
    <property type="entry name" value="Gemini_AL3"/>
    <property type="match status" value="1"/>
</dbReference>
<dbReference type="PRINTS" id="PR00231">
    <property type="entry name" value="GEMCOATAL3"/>
</dbReference>
<organism>
    <name type="scientific">Squash leaf curl virus</name>
    <name type="common">SLCV</name>
    <dbReference type="NCBI Taxonomy" id="10829"/>
    <lineage>
        <taxon>Viruses</taxon>
        <taxon>Monodnaviria</taxon>
        <taxon>Shotokuvirae</taxon>
        <taxon>Cressdnaviricota</taxon>
        <taxon>Repensiviricetes</taxon>
        <taxon>Geplafuvirales</taxon>
        <taxon>Geminiviridae</taxon>
        <taxon>Begomovirus</taxon>
    </lineage>
</organism>
<organismHost>
    <name type="scientific">Cucurbita moschata</name>
    <name type="common">Winter crookneck squash</name>
    <name type="synonym">Cucurbita pepo var. moschata</name>
    <dbReference type="NCBI Taxonomy" id="3662"/>
</organismHost>
<organismHost>
    <name type="scientific">Cucurbita pepo</name>
    <name type="common">Vegetable marrow</name>
    <name type="synonym">Summer squash</name>
    <dbReference type="NCBI Taxonomy" id="3663"/>
</organismHost>
<organismHost>
    <name type="scientific">Phaseolus vulgaris</name>
    <name type="common">Kidney bean</name>
    <name type="synonym">French bean</name>
    <dbReference type="NCBI Taxonomy" id="3885"/>
</organismHost>
<gene>
    <name type="ORF">AC3</name>
    <name type="ORF">AL3</name>
</gene>
<accession>P29049</accession>
<reference key="1">
    <citation type="journal article" date="1991" name="Virology">
        <title>Infectivity and complete nucleotide sequence of the cloned genomic components of a bipartite squash leaf curl geminivirus with a broad host range phenotype.</title>
        <authorList>
            <person name="Lazarowitz S.G."/>
            <person name="Lazdins I.B."/>
        </authorList>
    </citation>
    <scope>NUCLEOTIDE SEQUENCE [GENOMIC DNA]</scope>
</reference>
<feature type="chain" id="PRO_0000222244" description="Replication enhancer protein">
    <location>
        <begin position="1"/>
        <end position="134"/>
    </location>
</feature>
<comment type="function">
    <text evidence="1">Increases viral DNA accumulation. Enhances infectivity and symptom expression (By similarity).</text>
</comment>
<comment type="subunit">
    <text evidence="1">Homooligomer. Interacts with the replication-associated protein (REP). Interacts with host proliferating cell nuclear antigen (PCNA). Interacts with host retinoblastoma-related protein 1 (RBR1), and may thereby deregulate the host cell cycle. Oligomerization and interaction with PCNA are necessary for optimal replication enhancement (By similarity).</text>
</comment>
<comment type="similarity">
    <text evidence="2">Belongs to the geminiviridae replication enhancer protein family.</text>
</comment>
<comment type="sequence caution" evidence="2">
    <conflict type="erroneous initiation">
        <sequence resource="EMBL-CDS" id="AAC32412"/>
    </conflict>
</comment>
<sequence>MVMDLRTWDDITVHQAENSVFIWEVPNPLYFKMYXVEDPLYTHTRIYHIQIRFNHNLRRALNLHKAFLNFQVWTESIRASGTTYLNRFRHLVMLYLDRLGVIGLNNVIRAVSWATDRSYVNYVLENHEIKFKIY</sequence>
<name>REN_SLCV</name>
<protein>
    <recommendedName>
        <fullName>Replication enhancer protein</fullName>
        <shortName>REn</shortName>
    </recommendedName>
    <alternativeName>
        <fullName>Protein AC3</fullName>
    </alternativeName>
    <alternativeName>
        <fullName>Protein AL3</fullName>
    </alternativeName>
</protein>
<evidence type="ECO:0000250" key="1"/>
<evidence type="ECO:0000305" key="2"/>
<keyword id="KW-0945">Host-virus interaction</keyword>
<keyword id="KW-1185">Reference proteome</keyword>